<feature type="chain" id="PRO_0000176287" description="Elongation factor 4 2">
    <location>
        <begin position="1"/>
        <end position="595"/>
    </location>
</feature>
<feature type="domain" description="tr-type G">
    <location>
        <begin position="4"/>
        <end position="187"/>
    </location>
</feature>
<feature type="binding site" evidence="1">
    <location>
        <begin position="16"/>
        <end position="21"/>
    </location>
    <ligand>
        <name>GTP</name>
        <dbReference type="ChEBI" id="CHEBI:37565"/>
    </ligand>
</feature>
<feature type="binding site" evidence="1">
    <location>
        <begin position="133"/>
        <end position="136"/>
    </location>
    <ligand>
        <name>GTP</name>
        <dbReference type="ChEBI" id="CHEBI:37565"/>
    </ligand>
</feature>
<reference key="1">
    <citation type="journal article" date="2003" name="Proc. Natl. Acad. Sci. U.S.A.">
        <title>Complete genome sequence of Lactobacillus plantarum WCFS1.</title>
        <authorList>
            <person name="Kleerebezem M."/>
            <person name="Boekhorst J."/>
            <person name="van Kranenburg R."/>
            <person name="Molenaar D."/>
            <person name="Kuipers O.P."/>
            <person name="Leer R."/>
            <person name="Tarchini R."/>
            <person name="Peters S.A."/>
            <person name="Sandbrink H.M."/>
            <person name="Fiers M.W.E.J."/>
            <person name="Stiekema W."/>
            <person name="Klein Lankhorst R.M."/>
            <person name="Bron P.A."/>
            <person name="Hoffer S.M."/>
            <person name="Nierop Groot M.N."/>
            <person name="Kerkhoven R."/>
            <person name="De Vries M."/>
            <person name="Ursing B."/>
            <person name="De Vos W.M."/>
            <person name="Siezen R.J."/>
        </authorList>
    </citation>
    <scope>NUCLEOTIDE SEQUENCE [LARGE SCALE GENOMIC DNA]</scope>
    <source>
        <strain>ATCC BAA-793 / NCIMB 8826 / WCFS1</strain>
    </source>
</reference>
<reference key="2">
    <citation type="journal article" date="2012" name="J. Bacteriol.">
        <title>Complete resequencing and reannotation of the Lactobacillus plantarum WCFS1 genome.</title>
        <authorList>
            <person name="Siezen R.J."/>
            <person name="Francke C."/>
            <person name="Renckens B."/>
            <person name="Boekhorst J."/>
            <person name="Wels M."/>
            <person name="Kleerebezem M."/>
            <person name="van Hijum S.A."/>
        </authorList>
    </citation>
    <scope>NUCLEOTIDE SEQUENCE [LARGE SCALE GENOMIC DNA]</scope>
    <scope>GENOME REANNOTATION</scope>
    <source>
        <strain>ATCC BAA-793 / NCIMB 8826 / WCFS1</strain>
    </source>
</reference>
<dbReference type="EC" id="3.6.5.n1" evidence="1"/>
<dbReference type="EMBL" id="AL935263">
    <property type="protein sequence ID" value="CCC80162.1"/>
    <property type="molecule type" value="Genomic_DNA"/>
</dbReference>
<dbReference type="RefSeq" id="YP_004890676.1">
    <property type="nucleotide sequence ID" value="NC_004567.2"/>
</dbReference>
<dbReference type="SMR" id="Q88T65"/>
<dbReference type="STRING" id="220668.lp_3120"/>
<dbReference type="EnsemblBacteria" id="CCC80162">
    <property type="protein sequence ID" value="CCC80162"/>
    <property type="gene ID" value="lp_3120"/>
</dbReference>
<dbReference type="KEGG" id="lpl:lp_3120"/>
<dbReference type="PATRIC" id="fig|220668.9.peg.2609"/>
<dbReference type="eggNOG" id="COG0481">
    <property type="taxonomic scope" value="Bacteria"/>
</dbReference>
<dbReference type="HOGENOM" id="CLU_009995_3_3_9"/>
<dbReference type="OrthoDB" id="2147781at2"/>
<dbReference type="PhylomeDB" id="Q88T65"/>
<dbReference type="Proteomes" id="UP000000432">
    <property type="component" value="Chromosome"/>
</dbReference>
<dbReference type="GO" id="GO:0005886">
    <property type="term" value="C:plasma membrane"/>
    <property type="evidence" value="ECO:0007669"/>
    <property type="project" value="UniProtKB-SubCell"/>
</dbReference>
<dbReference type="GO" id="GO:0005525">
    <property type="term" value="F:GTP binding"/>
    <property type="evidence" value="ECO:0007669"/>
    <property type="project" value="UniProtKB-UniRule"/>
</dbReference>
<dbReference type="GO" id="GO:0003924">
    <property type="term" value="F:GTPase activity"/>
    <property type="evidence" value="ECO:0007669"/>
    <property type="project" value="UniProtKB-UniRule"/>
</dbReference>
<dbReference type="GO" id="GO:0043022">
    <property type="term" value="F:ribosome binding"/>
    <property type="evidence" value="ECO:0007669"/>
    <property type="project" value="UniProtKB-UniRule"/>
</dbReference>
<dbReference type="GO" id="GO:0003746">
    <property type="term" value="F:translation elongation factor activity"/>
    <property type="evidence" value="ECO:0007669"/>
    <property type="project" value="UniProtKB-UniRule"/>
</dbReference>
<dbReference type="GO" id="GO:0045727">
    <property type="term" value="P:positive regulation of translation"/>
    <property type="evidence" value="ECO:0007669"/>
    <property type="project" value="UniProtKB-UniRule"/>
</dbReference>
<dbReference type="CDD" id="cd03699">
    <property type="entry name" value="EF4_II"/>
    <property type="match status" value="1"/>
</dbReference>
<dbReference type="CDD" id="cd16260">
    <property type="entry name" value="EF4_III"/>
    <property type="match status" value="1"/>
</dbReference>
<dbReference type="CDD" id="cd01890">
    <property type="entry name" value="LepA"/>
    <property type="match status" value="1"/>
</dbReference>
<dbReference type="CDD" id="cd03709">
    <property type="entry name" value="lepA_C"/>
    <property type="match status" value="1"/>
</dbReference>
<dbReference type="FunFam" id="2.40.30.10:FF:000015">
    <property type="entry name" value="Translation factor GUF1, mitochondrial"/>
    <property type="match status" value="1"/>
</dbReference>
<dbReference type="FunFam" id="3.30.70.870:FF:000004">
    <property type="entry name" value="Translation factor GUF1, mitochondrial"/>
    <property type="match status" value="1"/>
</dbReference>
<dbReference type="Gene3D" id="3.30.70.240">
    <property type="match status" value="1"/>
</dbReference>
<dbReference type="Gene3D" id="3.30.70.2570">
    <property type="entry name" value="Elongation factor 4, C-terminal domain"/>
    <property type="match status" value="1"/>
</dbReference>
<dbReference type="Gene3D" id="3.30.70.870">
    <property type="entry name" value="Elongation Factor G (Translational Gtpase), domain 3"/>
    <property type="match status" value="1"/>
</dbReference>
<dbReference type="Gene3D" id="3.40.50.300">
    <property type="entry name" value="P-loop containing nucleotide triphosphate hydrolases"/>
    <property type="match status" value="1"/>
</dbReference>
<dbReference type="Gene3D" id="2.40.30.10">
    <property type="entry name" value="Translation factors"/>
    <property type="match status" value="1"/>
</dbReference>
<dbReference type="HAMAP" id="MF_00071">
    <property type="entry name" value="LepA"/>
    <property type="match status" value="1"/>
</dbReference>
<dbReference type="InterPro" id="IPR006297">
    <property type="entry name" value="EF-4"/>
</dbReference>
<dbReference type="InterPro" id="IPR035647">
    <property type="entry name" value="EFG_III/V"/>
</dbReference>
<dbReference type="InterPro" id="IPR000640">
    <property type="entry name" value="EFG_V-like"/>
</dbReference>
<dbReference type="InterPro" id="IPR038363">
    <property type="entry name" value="LepA_C_sf"/>
</dbReference>
<dbReference type="InterPro" id="IPR013842">
    <property type="entry name" value="LepA_CTD"/>
</dbReference>
<dbReference type="InterPro" id="IPR035654">
    <property type="entry name" value="LepA_IV"/>
</dbReference>
<dbReference type="InterPro" id="IPR027417">
    <property type="entry name" value="P-loop_NTPase"/>
</dbReference>
<dbReference type="InterPro" id="IPR005225">
    <property type="entry name" value="Small_GTP-bd"/>
</dbReference>
<dbReference type="InterPro" id="IPR000795">
    <property type="entry name" value="T_Tr_GTP-bd_dom"/>
</dbReference>
<dbReference type="InterPro" id="IPR009000">
    <property type="entry name" value="Transl_B-barrel_sf"/>
</dbReference>
<dbReference type="NCBIfam" id="TIGR01393">
    <property type="entry name" value="lepA"/>
    <property type="match status" value="1"/>
</dbReference>
<dbReference type="NCBIfam" id="TIGR00231">
    <property type="entry name" value="small_GTP"/>
    <property type="match status" value="1"/>
</dbReference>
<dbReference type="PANTHER" id="PTHR43512:SF4">
    <property type="entry name" value="TRANSLATION FACTOR GUF1 HOMOLOG, CHLOROPLASTIC"/>
    <property type="match status" value="1"/>
</dbReference>
<dbReference type="PANTHER" id="PTHR43512">
    <property type="entry name" value="TRANSLATION FACTOR GUF1-RELATED"/>
    <property type="match status" value="1"/>
</dbReference>
<dbReference type="Pfam" id="PF00679">
    <property type="entry name" value="EFG_C"/>
    <property type="match status" value="1"/>
</dbReference>
<dbReference type="Pfam" id="PF00009">
    <property type="entry name" value="GTP_EFTU"/>
    <property type="match status" value="1"/>
</dbReference>
<dbReference type="Pfam" id="PF06421">
    <property type="entry name" value="LepA_C"/>
    <property type="match status" value="1"/>
</dbReference>
<dbReference type="PRINTS" id="PR00315">
    <property type="entry name" value="ELONGATNFCT"/>
</dbReference>
<dbReference type="SUPFAM" id="SSF54980">
    <property type="entry name" value="EF-G C-terminal domain-like"/>
    <property type="match status" value="2"/>
</dbReference>
<dbReference type="SUPFAM" id="SSF52540">
    <property type="entry name" value="P-loop containing nucleoside triphosphate hydrolases"/>
    <property type="match status" value="1"/>
</dbReference>
<dbReference type="SUPFAM" id="SSF50447">
    <property type="entry name" value="Translation proteins"/>
    <property type="match status" value="1"/>
</dbReference>
<dbReference type="PROSITE" id="PS51722">
    <property type="entry name" value="G_TR_2"/>
    <property type="match status" value="1"/>
</dbReference>
<protein>
    <recommendedName>
        <fullName evidence="1">Elongation factor 4 2</fullName>
        <shortName evidence="1">EF-4 2</shortName>
        <ecNumber evidence="1">3.6.5.n1</ecNumber>
    </recommendedName>
    <alternativeName>
        <fullName evidence="1">Ribosomal back-translocase LepA 2</fullName>
    </alternativeName>
</protein>
<name>LEPA2_LACPL</name>
<comment type="function">
    <text evidence="1">Required for accurate and efficient protein synthesis under certain stress conditions. May act as a fidelity factor of the translation reaction, by catalyzing a one-codon backward translocation of tRNAs on improperly translocated ribosomes. Back-translocation proceeds from a post-translocation (POST) complex to a pre-translocation (PRE) complex, thus giving elongation factor G a second chance to translocate the tRNAs correctly. Binds to ribosomes in a GTP-dependent manner.</text>
</comment>
<comment type="catalytic activity">
    <reaction evidence="1">
        <text>GTP + H2O = GDP + phosphate + H(+)</text>
        <dbReference type="Rhea" id="RHEA:19669"/>
        <dbReference type="ChEBI" id="CHEBI:15377"/>
        <dbReference type="ChEBI" id="CHEBI:15378"/>
        <dbReference type="ChEBI" id="CHEBI:37565"/>
        <dbReference type="ChEBI" id="CHEBI:43474"/>
        <dbReference type="ChEBI" id="CHEBI:58189"/>
        <dbReference type="EC" id="3.6.5.n1"/>
    </reaction>
</comment>
<comment type="subcellular location">
    <subcellularLocation>
        <location evidence="1">Cell membrane</location>
        <topology evidence="1">Peripheral membrane protein</topology>
        <orientation evidence="1">Cytoplasmic side</orientation>
    </subcellularLocation>
</comment>
<comment type="similarity">
    <text evidence="1">Belongs to the TRAFAC class translation factor GTPase superfamily. Classic translation factor GTPase family. LepA subfamily.</text>
</comment>
<evidence type="ECO:0000255" key="1">
    <source>
        <dbReference type="HAMAP-Rule" id="MF_00071"/>
    </source>
</evidence>
<proteinExistence type="inferred from homology"/>
<accession>Q88T65</accession>
<accession>F9USN2</accession>
<organism>
    <name type="scientific">Lactiplantibacillus plantarum (strain ATCC BAA-793 / NCIMB 8826 / WCFS1)</name>
    <name type="common">Lactobacillus plantarum</name>
    <dbReference type="NCBI Taxonomy" id="220668"/>
    <lineage>
        <taxon>Bacteria</taxon>
        <taxon>Bacillati</taxon>
        <taxon>Bacillota</taxon>
        <taxon>Bacilli</taxon>
        <taxon>Lactobacillales</taxon>
        <taxon>Lactobacillaceae</taxon>
        <taxon>Lactiplantibacillus</taxon>
    </lineage>
</organism>
<gene>
    <name evidence="1" type="primary">lepA2</name>
    <name type="ordered locus">lp_3120</name>
</gene>
<sequence length="595" mass="65272">MKQSHIRNFAIIAHIDHGKSTLADQIMSLTQTVSAREQHAQLLDDMTVEQAHGVTVKARTVRNYYQADDGQEYEYNLIDTPGHVDFNYEVAKSLAATEGAILLVDATQGVQAQTIANYRIAKQRQLTLIPVLNKVDLPSADIDAALAQLNDLDSAFTPEQVLQISAKTGQGVPAVLEAIKQRLPAPQGDLHQPLKALVFDSLYDPYQGVIAYVRLIDGQLKSQQALCLMQGQQDFNGKAIGVFAPQMHPQESLSAGDVGYVVTGIKDPRKVRVGDTLTSVATPTQRPLAGYQPAKSMVFAGLYPKNNDYPALKEAVQKLNLNDPSFTYVEERSEALGVGFRCGFLGTFHLQIIRERLHDEYGVDVLTTAPNVTYHVTLTNGQQVIVNNPVQFPAFSLIKEVTEPFMKAEITMPADNLNAVLKLAEQHKGTLIDLANSGDLIVASLKIPLSEIAYHFFSELKSVSHGFASLSTAFMANEVSDLVKVEVDINYAPVDALTFIVHREDAPNMTQQLVANLKTTVPRQLYPTPVQARVEGKVIARVDVPPLRKNAAVNGEQHSTSKKAALLRRQSANKRRASKNTIKLPQSVFNAILSL</sequence>
<keyword id="KW-1003">Cell membrane</keyword>
<keyword id="KW-0342">GTP-binding</keyword>
<keyword id="KW-0378">Hydrolase</keyword>
<keyword id="KW-0472">Membrane</keyword>
<keyword id="KW-0547">Nucleotide-binding</keyword>
<keyword id="KW-0648">Protein biosynthesis</keyword>
<keyword id="KW-1185">Reference proteome</keyword>